<proteinExistence type="inferred from homology"/>
<gene>
    <name type="primary">flgH</name>
    <name type="ordered locus">ZMO0608</name>
</gene>
<sequence>MAHFMKPSFSAMLIAVTVLAVSPLHARKKVTQPDPNFAATYPDDPRPEVVPNGAIFQPSYGYMPIISGARASHVGDMVTITLVESFAASKSANTTTSRSGGASIIPPTTGPLSFFKATDATASSSHNFKGTGTTGQSNSLSGEITATVARVFPDGTMLIRGEKIMTINRGDEHIRISGLVRPWDIDGTNHVLSTRIGDARISYTGTGDVARASRMGWLGHFFQMISPF</sequence>
<accession>Q9Z5T8</accession>
<accession>Q5NPX3</accession>
<keyword id="KW-0975">Bacterial flagellum</keyword>
<keyword id="KW-0998">Cell outer membrane</keyword>
<keyword id="KW-0472">Membrane</keyword>
<keyword id="KW-1185">Reference proteome</keyword>
<keyword id="KW-0732">Signal</keyword>
<reference key="1">
    <citation type="submission" date="1999-01" db="EMBL/GenBank/DDBJ databases">
        <authorList>
            <person name="Um H.W."/>
            <person name="Kang H.S."/>
        </authorList>
    </citation>
    <scope>NUCLEOTIDE SEQUENCE [GENOMIC DNA]</scope>
    <source>
        <strain>ATCC 31821 / ZM4 / CP4</strain>
    </source>
</reference>
<reference key="2">
    <citation type="journal article" date="2005" name="Nat. Biotechnol.">
        <title>The genome sequence of the ethanologenic bacterium Zymomonas mobilis ZM4.</title>
        <authorList>
            <person name="Seo J.-S."/>
            <person name="Chong H."/>
            <person name="Park H.S."/>
            <person name="Yoon K.-O."/>
            <person name="Jung C."/>
            <person name="Kim J.J."/>
            <person name="Hong J.H."/>
            <person name="Kim H."/>
            <person name="Kim J.-H."/>
            <person name="Kil J.-I."/>
            <person name="Park C.J."/>
            <person name="Oh H.-M."/>
            <person name="Lee J.-S."/>
            <person name="Jin S.-J."/>
            <person name="Um H.-W."/>
            <person name="Lee H.-J."/>
            <person name="Oh S.-J."/>
            <person name="Kim J.Y."/>
            <person name="Kang H.L."/>
            <person name="Lee S.Y."/>
            <person name="Lee K.J."/>
            <person name="Kang H.S."/>
        </authorList>
    </citation>
    <scope>NUCLEOTIDE SEQUENCE [LARGE SCALE GENOMIC DNA]</scope>
    <source>
        <strain>ATCC 31821 / ZM4 / CP4</strain>
    </source>
</reference>
<evidence type="ECO:0000250" key="1"/>
<evidence type="ECO:0000255" key="2"/>
<evidence type="ECO:0000305" key="3"/>
<feature type="signal peptide" evidence="2">
    <location>
        <begin position="1"/>
        <end position="26"/>
    </location>
</feature>
<feature type="chain" id="PRO_0000009491" description="Flagellar L-ring protein">
    <location>
        <begin position="27"/>
        <end position="228"/>
    </location>
</feature>
<feature type="sequence conflict" description="In Ref. 1; AAD19723." evidence="3" ref="1">
    <original>SRMGWLGHFFQMISPF</original>
    <variation>TVWVGWVTSSK</variation>
    <location>
        <begin position="213"/>
        <end position="228"/>
    </location>
</feature>
<dbReference type="EMBL" id="AF124349">
    <property type="protein sequence ID" value="AAD19723.1"/>
    <property type="status" value="ALT_INIT"/>
    <property type="molecule type" value="Genomic_DNA"/>
</dbReference>
<dbReference type="EMBL" id="AE008692">
    <property type="protein sequence ID" value="AAV89232.2"/>
    <property type="molecule type" value="Genomic_DNA"/>
</dbReference>
<dbReference type="RefSeq" id="WP_011240509.1">
    <property type="nucleotide sequence ID" value="NZ_CP035711.1"/>
</dbReference>
<dbReference type="SMR" id="Q9Z5T8"/>
<dbReference type="STRING" id="264203.ZMO0608"/>
<dbReference type="KEGG" id="zmo:ZMO0608"/>
<dbReference type="eggNOG" id="COG2063">
    <property type="taxonomic scope" value="Bacteria"/>
</dbReference>
<dbReference type="HOGENOM" id="CLU_069313_0_0_5"/>
<dbReference type="Proteomes" id="UP000001173">
    <property type="component" value="Chromosome"/>
</dbReference>
<dbReference type="GO" id="GO:0009427">
    <property type="term" value="C:bacterial-type flagellum basal body, distal rod, L ring"/>
    <property type="evidence" value="ECO:0007669"/>
    <property type="project" value="InterPro"/>
</dbReference>
<dbReference type="GO" id="GO:0009279">
    <property type="term" value="C:cell outer membrane"/>
    <property type="evidence" value="ECO:0007669"/>
    <property type="project" value="UniProtKB-SubCell"/>
</dbReference>
<dbReference type="GO" id="GO:0003774">
    <property type="term" value="F:cytoskeletal motor activity"/>
    <property type="evidence" value="ECO:0007669"/>
    <property type="project" value="InterPro"/>
</dbReference>
<dbReference type="GO" id="GO:0071973">
    <property type="term" value="P:bacterial-type flagellum-dependent cell motility"/>
    <property type="evidence" value="ECO:0007669"/>
    <property type="project" value="InterPro"/>
</dbReference>
<dbReference type="HAMAP" id="MF_00415">
    <property type="entry name" value="FlgH"/>
    <property type="match status" value="1"/>
</dbReference>
<dbReference type="InterPro" id="IPR000527">
    <property type="entry name" value="Flag_Lring"/>
</dbReference>
<dbReference type="PANTHER" id="PTHR34933">
    <property type="entry name" value="FLAGELLAR L-RING PROTEIN"/>
    <property type="match status" value="1"/>
</dbReference>
<dbReference type="PANTHER" id="PTHR34933:SF1">
    <property type="entry name" value="FLAGELLAR L-RING PROTEIN"/>
    <property type="match status" value="1"/>
</dbReference>
<dbReference type="Pfam" id="PF02107">
    <property type="entry name" value="FlgH"/>
    <property type="match status" value="1"/>
</dbReference>
<dbReference type="PRINTS" id="PR01008">
    <property type="entry name" value="FLGLRINGFLGH"/>
</dbReference>
<protein>
    <recommendedName>
        <fullName>Flagellar L-ring protein</fullName>
    </recommendedName>
    <alternativeName>
        <fullName>Basal body L-ring protein</fullName>
    </alternativeName>
</protein>
<name>FLGH_ZYMMO</name>
<comment type="function">
    <text evidence="1">Assembles around the rod to form the L-ring and probably protects the motor/basal body from shearing forces during rotation.</text>
</comment>
<comment type="subunit">
    <text evidence="1">The basal body constitutes a major portion of the flagellar organelle and consists of four rings (L,P,S, and M) mounted on a central rod.</text>
</comment>
<comment type="subcellular location">
    <subcellularLocation>
        <location evidence="1">Cell outer membrane</location>
    </subcellularLocation>
    <subcellularLocation>
        <location evidence="1">Bacterial flagellum basal body</location>
    </subcellularLocation>
</comment>
<comment type="similarity">
    <text evidence="3">Belongs to the FlgH family.</text>
</comment>
<comment type="sequence caution" evidence="3">
    <conflict type="erroneous initiation">
        <sequence resource="EMBL-CDS" id="AAD19723"/>
    </conflict>
</comment>
<organism>
    <name type="scientific">Zymomonas mobilis subsp. mobilis (strain ATCC 31821 / ZM4 / CP4)</name>
    <dbReference type="NCBI Taxonomy" id="264203"/>
    <lineage>
        <taxon>Bacteria</taxon>
        <taxon>Pseudomonadati</taxon>
        <taxon>Pseudomonadota</taxon>
        <taxon>Alphaproteobacteria</taxon>
        <taxon>Sphingomonadales</taxon>
        <taxon>Zymomonadaceae</taxon>
        <taxon>Zymomonas</taxon>
    </lineage>
</organism>